<reference key="1">
    <citation type="journal article" date="2010" name="Environ. Microbiol.">
        <title>The genome of Syntrophomonas wolfei: new insights into syntrophic metabolism and biohydrogen production.</title>
        <authorList>
            <person name="Sieber J.R."/>
            <person name="Sims D.R."/>
            <person name="Han C."/>
            <person name="Kim E."/>
            <person name="Lykidis A."/>
            <person name="Lapidus A.L."/>
            <person name="McDonnald E."/>
            <person name="Rohlin L."/>
            <person name="Culley D.E."/>
            <person name="Gunsalus R."/>
            <person name="McInerney M.J."/>
        </authorList>
    </citation>
    <scope>NUCLEOTIDE SEQUENCE [LARGE SCALE GENOMIC DNA]</scope>
    <source>
        <strain>DSM 2245B / Goettingen</strain>
    </source>
</reference>
<accession>Q0AWV6</accession>
<evidence type="ECO:0000255" key="1">
    <source>
        <dbReference type="HAMAP-Rule" id="MF_00014"/>
    </source>
</evidence>
<name>RIMM_SYNWW</name>
<feature type="chain" id="PRO_0000321766" description="Ribosome maturation factor RimM">
    <location>
        <begin position="1"/>
        <end position="172"/>
    </location>
</feature>
<feature type="domain" description="PRC barrel" evidence="1">
    <location>
        <begin position="96"/>
        <end position="169"/>
    </location>
</feature>
<protein>
    <recommendedName>
        <fullName evidence="1">Ribosome maturation factor RimM</fullName>
    </recommendedName>
</protein>
<comment type="function">
    <text evidence="1">An accessory protein needed during the final step in the assembly of 30S ribosomal subunit, possibly for assembly of the head region. Essential for efficient processing of 16S rRNA. May be needed both before and after RbfA during the maturation of 16S rRNA. It has affinity for free ribosomal 30S subunits but not for 70S ribosomes.</text>
</comment>
<comment type="subunit">
    <text evidence="1">Binds ribosomal protein uS19.</text>
</comment>
<comment type="subcellular location">
    <subcellularLocation>
        <location evidence="1">Cytoplasm</location>
    </subcellularLocation>
</comment>
<comment type="domain">
    <text evidence="1">The PRC barrel domain binds ribosomal protein uS19.</text>
</comment>
<comment type="similarity">
    <text evidence="1">Belongs to the RimM family.</text>
</comment>
<sequence>MNSDKLVAIGKIAGTYGYAGWLKVIPLTDFPERFYKLDKVILNQGGKLGTFLVDGLKAHNNFYLFKFSGIDTVEVAQGFQNGILQIDESELYPLPEGYFYHFQLQGLSVYDEEKGLLGELTDIIETGANDVYVVDSPQYGEILIPAIKDVILAVKLEEKRMEIKLLPGLIED</sequence>
<organism>
    <name type="scientific">Syntrophomonas wolfei subsp. wolfei (strain DSM 2245B / Goettingen)</name>
    <dbReference type="NCBI Taxonomy" id="335541"/>
    <lineage>
        <taxon>Bacteria</taxon>
        <taxon>Bacillati</taxon>
        <taxon>Bacillota</taxon>
        <taxon>Clostridia</taxon>
        <taxon>Eubacteriales</taxon>
        <taxon>Syntrophomonadaceae</taxon>
        <taxon>Syntrophomonas</taxon>
    </lineage>
</organism>
<keyword id="KW-0143">Chaperone</keyword>
<keyword id="KW-0963">Cytoplasm</keyword>
<keyword id="KW-1185">Reference proteome</keyword>
<keyword id="KW-0690">Ribosome biogenesis</keyword>
<keyword id="KW-0698">rRNA processing</keyword>
<gene>
    <name evidence="1" type="primary">rimM</name>
    <name type="ordered locus">Swol_1494</name>
</gene>
<proteinExistence type="inferred from homology"/>
<dbReference type="EMBL" id="CP000448">
    <property type="protein sequence ID" value="ABI68798.1"/>
    <property type="molecule type" value="Genomic_DNA"/>
</dbReference>
<dbReference type="RefSeq" id="WP_011640897.1">
    <property type="nucleotide sequence ID" value="NC_008346.1"/>
</dbReference>
<dbReference type="SMR" id="Q0AWV6"/>
<dbReference type="STRING" id="335541.Swol_1494"/>
<dbReference type="KEGG" id="swo:Swol_1494"/>
<dbReference type="eggNOG" id="COG0806">
    <property type="taxonomic scope" value="Bacteria"/>
</dbReference>
<dbReference type="HOGENOM" id="CLU_077636_3_2_9"/>
<dbReference type="OrthoDB" id="9810331at2"/>
<dbReference type="Proteomes" id="UP000001968">
    <property type="component" value="Chromosome"/>
</dbReference>
<dbReference type="GO" id="GO:0005737">
    <property type="term" value="C:cytoplasm"/>
    <property type="evidence" value="ECO:0007669"/>
    <property type="project" value="UniProtKB-SubCell"/>
</dbReference>
<dbReference type="GO" id="GO:0005840">
    <property type="term" value="C:ribosome"/>
    <property type="evidence" value="ECO:0007669"/>
    <property type="project" value="InterPro"/>
</dbReference>
<dbReference type="GO" id="GO:0043022">
    <property type="term" value="F:ribosome binding"/>
    <property type="evidence" value="ECO:0007669"/>
    <property type="project" value="InterPro"/>
</dbReference>
<dbReference type="GO" id="GO:0042274">
    <property type="term" value="P:ribosomal small subunit biogenesis"/>
    <property type="evidence" value="ECO:0007669"/>
    <property type="project" value="UniProtKB-UniRule"/>
</dbReference>
<dbReference type="GO" id="GO:0006364">
    <property type="term" value="P:rRNA processing"/>
    <property type="evidence" value="ECO:0007669"/>
    <property type="project" value="UniProtKB-UniRule"/>
</dbReference>
<dbReference type="Gene3D" id="2.30.30.240">
    <property type="entry name" value="PRC-barrel domain"/>
    <property type="match status" value="1"/>
</dbReference>
<dbReference type="Gene3D" id="2.40.30.60">
    <property type="entry name" value="RimM"/>
    <property type="match status" value="1"/>
</dbReference>
<dbReference type="HAMAP" id="MF_00014">
    <property type="entry name" value="Ribosome_mat_RimM"/>
    <property type="match status" value="1"/>
</dbReference>
<dbReference type="InterPro" id="IPR011033">
    <property type="entry name" value="PRC_barrel-like_sf"/>
</dbReference>
<dbReference type="InterPro" id="IPR056792">
    <property type="entry name" value="PRC_RimM"/>
</dbReference>
<dbReference type="InterPro" id="IPR011961">
    <property type="entry name" value="RimM"/>
</dbReference>
<dbReference type="InterPro" id="IPR002676">
    <property type="entry name" value="RimM_N"/>
</dbReference>
<dbReference type="InterPro" id="IPR036976">
    <property type="entry name" value="RimM_N_sf"/>
</dbReference>
<dbReference type="InterPro" id="IPR009000">
    <property type="entry name" value="Transl_B-barrel_sf"/>
</dbReference>
<dbReference type="NCBIfam" id="TIGR02273">
    <property type="entry name" value="16S_RimM"/>
    <property type="match status" value="1"/>
</dbReference>
<dbReference type="PANTHER" id="PTHR33692">
    <property type="entry name" value="RIBOSOME MATURATION FACTOR RIMM"/>
    <property type="match status" value="1"/>
</dbReference>
<dbReference type="PANTHER" id="PTHR33692:SF1">
    <property type="entry name" value="RIBOSOME MATURATION FACTOR RIMM"/>
    <property type="match status" value="1"/>
</dbReference>
<dbReference type="Pfam" id="PF24986">
    <property type="entry name" value="PRC_RimM"/>
    <property type="match status" value="1"/>
</dbReference>
<dbReference type="Pfam" id="PF01782">
    <property type="entry name" value="RimM"/>
    <property type="match status" value="1"/>
</dbReference>
<dbReference type="SUPFAM" id="SSF50346">
    <property type="entry name" value="PRC-barrel domain"/>
    <property type="match status" value="1"/>
</dbReference>
<dbReference type="SUPFAM" id="SSF50447">
    <property type="entry name" value="Translation proteins"/>
    <property type="match status" value="1"/>
</dbReference>